<proteinExistence type="inferred from homology"/>
<name>IF2P_METAR</name>
<accession>Q0W8X2</accession>
<protein>
    <recommendedName>
        <fullName evidence="2">Probable translation initiation factor IF-2</fullName>
    </recommendedName>
</protein>
<feature type="chain" id="PRO_0000335537" description="Probable translation initiation factor IF-2">
    <location>
        <begin position="1"/>
        <end position="594"/>
    </location>
</feature>
<feature type="domain" description="tr-type G">
    <location>
        <begin position="11"/>
        <end position="226"/>
    </location>
</feature>
<feature type="region of interest" description="G1" evidence="1">
    <location>
        <begin position="20"/>
        <end position="27"/>
    </location>
</feature>
<feature type="region of interest" description="G2" evidence="1">
    <location>
        <begin position="45"/>
        <end position="49"/>
    </location>
</feature>
<feature type="region of interest" description="G3" evidence="1">
    <location>
        <begin position="81"/>
        <end position="84"/>
    </location>
</feature>
<feature type="region of interest" description="G4" evidence="1">
    <location>
        <begin position="135"/>
        <end position="138"/>
    </location>
</feature>
<feature type="region of interest" description="G5" evidence="1">
    <location>
        <begin position="203"/>
        <end position="205"/>
    </location>
</feature>
<feature type="binding site" evidence="2">
    <location>
        <begin position="20"/>
        <end position="27"/>
    </location>
    <ligand>
        <name>GTP</name>
        <dbReference type="ChEBI" id="CHEBI:37565"/>
    </ligand>
</feature>
<feature type="binding site" evidence="2">
    <location>
        <begin position="81"/>
        <end position="85"/>
    </location>
    <ligand>
        <name>GTP</name>
        <dbReference type="ChEBI" id="CHEBI:37565"/>
    </ligand>
</feature>
<feature type="binding site" evidence="2">
    <location>
        <begin position="135"/>
        <end position="138"/>
    </location>
    <ligand>
        <name>GTP</name>
        <dbReference type="ChEBI" id="CHEBI:37565"/>
    </ligand>
</feature>
<keyword id="KW-0342">GTP-binding</keyword>
<keyword id="KW-0396">Initiation factor</keyword>
<keyword id="KW-0547">Nucleotide-binding</keyword>
<keyword id="KW-0648">Protein biosynthesis</keyword>
<keyword id="KW-1185">Reference proteome</keyword>
<dbReference type="EMBL" id="AM114193">
    <property type="protein sequence ID" value="CAJ35154.1"/>
    <property type="molecule type" value="Genomic_DNA"/>
</dbReference>
<dbReference type="RefSeq" id="WP_012037333.1">
    <property type="nucleotide sequence ID" value="NC_009464.1"/>
</dbReference>
<dbReference type="SMR" id="Q0W8X2"/>
<dbReference type="STRING" id="351160.LRC142"/>
<dbReference type="GeneID" id="5143926"/>
<dbReference type="KEGG" id="rci:LRC142"/>
<dbReference type="PATRIC" id="fig|351160.9.peg.3107"/>
<dbReference type="eggNOG" id="arCOG01560">
    <property type="taxonomic scope" value="Archaea"/>
</dbReference>
<dbReference type="OrthoDB" id="30957at2157"/>
<dbReference type="Proteomes" id="UP000000663">
    <property type="component" value="Chromosome"/>
</dbReference>
<dbReference type="GO" id="GO:0005737">
    <property type="term" value="C:cytoplasm"/>
    <property type="evidence" value="ECO:0007669"/>
    <property type="project" value="TreeGrafter"/>
</dbReference>
<dbReference type="GO" id="GO:0005525">
    <property type="term" value="F:GTP binding"/>
    <property type="evidence" value="ECO:0007669"/>
    <property type="project" value="UniProtKB-KW"/>
</dbReference>
<dbReference type="GO" id="GO:0003924">
    <property type="term" value="F:GTPase activity"/>
    <property type="evidence" value="ECO:0007669"/>
    <property type="project" value="UniProtKB-UniRule"/>
</dbReference>
<dbReference type="GO" id="GO:0003743">
    <property type="term" value="F:translation initiation factor activity"/>
    <property type="evidence" value="ECO:0007669"/>
    <property type="project" value="UniProtKB-UniRule"/>
</dbReference>
<dbReference type="CDD" id="cd03703">
    <property type="entry name" value="aeIF5B_II"/>
    <property type="match status" value="1"/>
</dbReference>
<dbReference type="CDD" id="cd16266">
    <property type="entry name" value="IF2_aeIF5B_IV"/>
    <property type="match status" value="1"/>
</dbReference>
<dbReference type="CDD" id="cd01887">
    <property type="entry name" value="IF2_eIF5B"/>
    <property type="match status" value="1"/>
</dbReference>
<dbReference type="FunFam" id="3.40.50.300:FF:000112">
    <property type="entry name" value="Eukaryotic translation initiation factor 5B"/>
    <property type="match status" value="1"/>
</dbReference>
<dbReference type="FunFam" id="2.40.30.10:FF:000013">
    <property type="entry name" value="eukaryotic translation initiation factor 5B"/>
    <property type="match status" value="1"/>
</dbReference>
<dbReference type="FunFam" id="3.40.50.10050:FF:000001">
    <property type="entry name" value="Translation initiation factor IF-2"/>
    <property type="match status" value="1"/>
</dbReference>
<dbReference type="Gene3D" id="3.40.50.300">
    <property type="entry name" value="P-loop containing nucleotide triphosphate hydrolases"/>
    <property type="match status" value="1"/>
</dbReference>
<dbReference type="Gene3D" id="2.40.30.10">
    <property type="entry name" value="Translation factors"/>
    <property type="match status" value="2"/>
</dbReference>
<dbReference type="Gene3D" id="3.40.50.10050">
    <property type="entry name" value="Translation initiation factor IF- 2, domain 3"/>
    <property type="match status" value="1"/>
</dbReference>
<dbReference type="HAMAP" id="MF_00100_A">
    <property type="entry name" value="IF_2_A"/>
    <property type="match status" value="1"/>
</dbReference>
<dbReference type="InterPro" id="IPR029459">
    <property type="entry name" value="EFTU-type"/>
</dbReference>
<dbReference type="InterPro" id="IPR027417">
    <property type="entry name" value="P-loop_NTPase"/>
</dbReference>
<dbReference type="InterPro" id="IPR005225">
    <property type="entry name" value="Small_GTP-bd"/>
</dbReference>
<dbReference type="InterPro" id="IPR000795">
    <property type="entry name" value="T_Tr_GTP-bd_dom"/>
</dbReference>
<dbReference type="InterPro" id="IPR004544">
    <property type="entry name" value="TF_aIF-2_arc"/>
</dbReference>
<dbReference type="InterPro" id="IPR015760">
    <property type="entry name" value="TIF_IF2"/>
</dbReference>
<dbReference type="InterPro" id="IPR023115">
    <property type="entry name" value="TIF_IF2_dom3"/>
</dbReference>
<dbReference type="InterPro" id="IPR036925">
    <property type="entry name" value="TIF_IF2_dom3_sf"/>
</dbReference>
<dbReference type="InterPro" id="IPR009000">
    <property type="entry name" value="Transl_B-barrel_sf"/>
</dbReference>
<dbReference type="NCBIfam" id="TIGR00491">
    <property type="entry name" value="aIF-2"/>
    <property type="match status" value="1"/>
</dbReference>
<dbReference type="NCBIfam" id="NF003078">
    <property type="entry name" value="PRK04004.1"/>
    <property type="match status" value="1"/>
</dbReference>
<dbReference type="NCBIfam" id="NF011418">
    <property type="entry name" value="PRK14845.1"/>
    <property type="match status" value="1"/>
</dbReference>
<dbReference type="NCBIfam" id="TIGR00231">
    <property type="entry name" value="small_GTP"/>
    <property type="match status" value="1"/>
</dbReference>
<dbReference type="PANTHER" id="PTHR43381:SF4">
    <property type="entry name" value="EUKARYOTIC TRANSLATION INITIATION FACTOR 5B"/>
    <property type="match status" value="1"/>
</dbReference>
<dbReference type="PANTHER" id="PTHR43381">
    <property type="entry name" value="TRANSLATION INITIATION FACTOR IF-2-RELATED"/>
    <property type="match status" value="1"/>
</dbReference>
<dbReference type="Pfam" id="PF00009">
    <property type="entry name" value="GTP_EFTU"/>
    <property type="match status" value="1"/>
</dbReference>
<dbReference type="Pfam" id="PF14578">
    <property type="entry name" value="GTP_EFTU_D4"/>
    <property type="match status" value="1"/>
</dbReference>
<dbReference type="Pfam" id="PF11987">
    <property type="entry name" value="IF-2"/>
    <property type="match status" value="1"/>
</dbReference>
<dbReference type="PRINTS" id="PR00315">
    <property type="entry name" value="ELONGATNFCT"/>
</dbReference>
<dbReference type="SUPFAM" id="SSF52156">
    <property type="entry name" value="Initiation factor IF2/eIF5b, domain 3"/>
    <property type="match status" value="1"/>
</dbReference>
<dbReference type="SUPFAM" id="SSF52540">
    <property type="entry name" value="P-loop containing nucleoside triphosphate hydrolases"/>
    <property type="match status" value="1"/>
</dbReference>
<dbReference type="SUPFAM" id="SSF50447">
    <property type="entry name" value="Translation proteins"/>
    <property type="match status" value="1"/>
</dbReference>
<dbReference type="PROSITE" id="PS51722">
    <property type="entry name" value="G_TR_2"/>
    <property type="match status" value="1"/>
</dbReference>
<reference key="1">
    <citation type="journal article" date="2006" name="Science">
        <title>Genome of rice cluster I archaea -- the key methane producers in the rice rhizosphere.</title>
        <authorList>
            <person name="Erkel C."/>
            <person name="Kube M."/>
            <person name="Reinhardt R."/>
            <person name="Liesack W."/>
        </authorList>
    </citation>
    <scope>NUCLEOTIDE SEQUENCE [LARGE SCALE GENOMIC DNA]</scope>
    <source>
        <strain>DSM 22066 / NBRC 105507 / MRE50</strain>
    </source>
</reference>
<comment type="function">
    <text evidence="2">Function in general translation initiation by promoting the binding of the formylmethionine-tRNA to ribosomes. Seems to function along with eIF-2.</text>
</comment>
<comment type="similarity">
    <text evidence="2">Belongs to the TRAFAC class translation factor GTPase superfamily. Classic translation factor GTPase family. IF-2 subfamily.</text>
</comment>
<organism>
    <name type="scientific">Methanocella arvoryzae (strain DSM 22066 / NBRC 105507 / MRE50)</name>
    <dbReference type="NCBI Taxonomy" id="351160"/>
    <lineage>
        <taxon>Archaea</taxon>
        <taxon>Methanobacteriati</taxon>
        <taxon>Methanobacteriota</taxon>
        <taxon>Stenosarchaea group</taxon>
        <taxon>Methanomicrobia</taxon>
        <taxon>Methanocellales</taxon>
        <taxon>Methanocellaceae</taxon>
        <taxon>Methanocella</taxon>
    </lineage>
</organism>
<evidence type="ECO:0000250" key="1"/>
<evidence type="ECO:0000255" key="2">
    <source>
        <dbReference type="HAMAP-Rule" id="MF_00100"/>
    </source>
</evidence>
<gene>
    <name evidence="2" type="primary">infB</name>
    <name type="ordered locus">UNCMA_30180</name>
    <name type="ORF">LRC142</name>
</gene>
<sequence length="594" mass="65912">MATATEIRKDLRTPIVCVMGHVDHGKTSLLDRIRGTAVVDKEAGAITQHIGATEVPLQTIQTLCKGMIGGNIVVPGLLFIDTPGHHAFTNLRSRGGALADLAVLVVDINEGFQPQTVEAIKILKQFKTPFVIAANKIDRIHGWTAKNNSPFLQTFNSQPDHVKGIIETKTYELVGRMSDLGFSSDRYDRIRDFTRNIGIIPISARTGEGIPDLLMILIGLAQRFLEESLKFQVTGPGVGTILEVKEERGLGYTIDTIIYDGEIRVGDTIVIGGREKPYSTKVRALLKPKPNREIRVEERFDRVNKVTAASGVKILAPELEKAMAGSQVRVTKESNVEDIIKEIEQEMEQAKIVTDEVGVMVKADTLGSLEAIVNELREAKIPIGRADVGDISKRDIINAETVNDPMYRVMLGFNVTILPDANDYLQTTDIKIFNSDVIYHLIDDFRKWETEQRALAEKKKFAEIVRPGKVKYLPNCTFRQSKPAVIGLQIMGGMLKPGVTLIKPDGSKIGVVRQIQERNENISIATVGKEVAVSIDGPTAGRQINEGEIYFVDVPEGHSKVLEFQLKDTIKQDELETLMEFLAIKRKDNPFWGR</sequence>